<name>GLMM_RUEPO</name>
<proteinExistence type="inferred from homology"/>
<sequence>MRKLFGTDGVRGTANTHPMTAEMALRIGAAVGRYFRREAGGVHRVVIGKDTRLSGYMFENALTAGLASTGMNVLLLGPVPTPAVGLMTRSMRADLGVMISASHNSAEDNGIKFFGPDGFKLSDQAEMEIEEMVATGVRLAQAHNIGRVRRVDDARFRYGERVKSSLTRGLRLDGLKVVVDCANGAAHRTAPEILWELGADVVPIGTSPDGLNINRGCGSTCPRTASEAVVAHGADVGICLDGDADRVIVIDQLGNVADGDQIMALLAARWAAEGRLQGGALVATVMSNLGLERFLGDRGIGLERTAVGDRYVVERMREGGFNLGGEQSGHIVMSDFATTGDGLMAGLHFLGEMMRSGQPSSELVRQFVPVPQLLKNVRFAKGQTPLDAASVQSAIAEAEGVLNGSGRLLIRKSGTEPLIRVMAECEDEALLTRAVDSVVEAVADAVQA</sequence>
<keyword id="KW-0413">Isomerase</keyword>
<keyword id="KW-0460">Magnesium</keyword>
<keyword id="KW-0479">Metal-binding</keyword>
<keyword id="KW-0597">Phosphoprotein</keyword>
<keyword id="KW-1185">Reference proteome</keyword>
<dbReference type="EC" id="5.4.2.10" evidence="1"/>
<dbReference type="EMBL" id="CP000031">
    <property type="protein sequence ID" value="AAV94652.1"/>
    <property type="molecule type" value="Genomic_DNA"/>
</dbReference>
<dbReference type="RefSeq" id="WP_011047102.1">
    <property type="nucleotide sequence ID" value="NC_003911.12"/>
</dbReference>
<dbReference type="SMR" id="Q5LTP9"/>
<dbReference type="STRING" id="246200.SPO1364"/>
<dbReference type="PaxDb" id="246200-SPO1364"/>
<dbReference type="KEGG" id="sil:SPO1364"/>
<dbReference type="eggNOG" id="COG1109">
    <property type="taxonomic scope" value="Bacteria"/>
</dbReference>
<dbReference type="HOGENOM" id="CLU_016950_7_0_5"/>
<dbReference type="OrthoDB" id="9803322at2"/>
<dbReference type="Proteomes" id="UP000001023">
    <property type="component" value="Chromosome"/>
</dbReference>
<dbReference type="GO" id="GO:0005829">
    <property type="term" value="C:cytosol"/>
    <property type="evidence" value="ECO:0007669"/>
    <property type="project" value="TreeGrafter"/>
</dbReference>
<dbReference type="GO" id="GO:0000287">
    <property type="term" value="F:magnesium ion binding"/>
    <property type="evidence" value="ECO:0007669"/>
    <property type="project" value="UniProtKB-UniRule"/>
</dbReference>
<dbReference type="GO" id="GO:0008966">
    <property type="term" value="F:phosphoglucosamine mutase activity"/>
    <property type="evidence" value="ECO:0007669"/>
    <property type="project" value="UniProtKB-UniRule"/>
</dbReference>
<dbReference type="GO" id="GO:0004615">
    <property type="term" value="F:phosphomannomutase activity"/>
    <property type="evidence" value="ECO:0007669"/>
    <property type="project" value="TreeGrafter"/>
</dbReference>
<dbReference type="GO" id="GO:0005975">
    <property type="term" value="P:carbohydrate metabolic process"/>
    <property type="evidence" value="ECO:0007669"/>
    <property type="project" value="InterPro"/>
</dbReference>
<dbReference type="GO" id="GO:0009252">
    <property type="term" value="P:peptidoglycan biosynthetic process"/>
    <property type="evidence" value="ECO:0007669"/>
    <property type="project" value="TreeGrafter"/>
</dbReference>
<dbReference type="GO" id="GO:0006048">
    <property type="term" value="P:UDP-N-acetylglucosamine biosynthetic process"/>
    <property type="evidence" value="ECO:0007669"/>
    <property type="project" value="TreeGrafter"/>
</dbReference>
<dbReference type="CDD" id="cd05802">
    <property type="entry name" value="GlmM"/>
    <property type="match status" value="1"/>
</dbReference>
<dbReference type="FunFam" id="3.30.310.50:FF:000001">
    <property type="entry name" value="Phosphoglucosamine mutase"/>
    <property type="match status" value="1"/>
</dbReference>
<dbReference type="FunFam" id="3.40.120.10:FF:000001">
    <property type="entry name" value="Phosphoglucosamine mutase"/>
    <property type="match status" value="1"/>
</dbReference>
<dbReference type="FunFam" id="3.40.120.10:FF:000003">
    <property type="entry name" value="Phosphoglucosamine mutase"/>
    <property type="match status" value="1"/>
</dbReference>
<dbReference type="Gene3D" id="3.40.120.10">
    <property type="entry name" value="Alpha-D-Glucose-1,6-Bisphosphate, subunit A, domain 3"/>
    <property type="match status" value="3"/>
</dbReference>
<dbReference type="Gene3D" id="3.30.310.50">
    <property type="entry name" value="Alpha-D-phosphohexomutase, C-terminal domain"/>
    <property type="match status" value="1"/>
</dbReference>
<dbReference type="HAMAP" id="MF_01554_B">
    <property type="entry name" value="GlmM_B"/>
    <property type="match status" value="1"/>
</dbReference>
<dbReference type="InterPro" id="IPR005844">
    <property type="entry name" value="A-D-PHexomutase_a/b/a-I"/>
</dbReference>
<dbReference type="InterPro" id="IPR016055">
    <property type="entry name" value="A-D-PHexomutase_a/b/a-I/II/III"/>
</dbReference>
<dbReference type="InterPro" id="IPR005845">
    <property type="entry name" value="A-D-PHexomutase_a/b/a-II"/>
</dbReference>
<dbReference type="InterPro" id="IPR005846">
    <property type="entry name" value="A-D-PHexomutase_a/b/a-III"/>
</dbReference>
<dbReference type="InterPro" id="IPR005843">
    <property type="entry name" value="A-D-PHexomutase_C"/>
</dbReference>
<dbReference type="InterPro" id="IPR036900">
    <property type="entry name" value="A-D-PHexomutase_C_sf"/>
</dbReference>
<dbReference type="InterPro" id="IPR005841">
    <property type="entry name" value="Alpha-D-phosphohexomutase_SF"/>
</dbReference>
<dbReference type="InterPro" id="IPR006352">
    <property type="entry name" value="GlmM_bact"/>
</dbReference>
<dbReference type="InterPro" id="IPR050060">
    <property type="entry name" value="Phosphoglucosamine_mutase"/>
</dbReference>
<dbReference type="NCBIfam" id="TIGR01455">
    <property type="entry name" value="glmM"/>
    <property type="match status" value="1"/>
</dbReference>
<dbReference type="NCBIfam" id="NF008139">
    <property type="entry name" value="PRK10887.1"/>
    <property type="match status" value="1"/>
</dbReference>
<dbReference type="PANTHER" id="PTHR42946:SF1">
    <property type="entry name" value="PHOSPHOGLUCOMUTASE (ALPHA-D-GLUCOSE-1,6-BISPHOSPHATE-DEPENDENT)"/>
    <property type="match status" value="1"/>
</dbReference>
<dbReference type="PANTHER" id="PTHR42946">
    <property type="entry name" value="PHOSPHOHEXOSE MUTASE"/>
    <property type="match status" value="1"/>
</dbReference>
<dbReference type="Pfam" id="PF02878">
    <property type="entry name" value="PGM_PMM_I"/>
    <property type="match status" value="1"/>
</dbReference>
<dbReference type="Pfam" id="PF02879">
    <property type="entry name" value="PGM_PMM_II"/>
    <property type="match status" value="1"/>
</dbReference>
<dbReference type="Pfam" id="PF02880">
    <property type="entry name" value="PGM_PMM_III"/>
    <property type="match status" value="1"/>
</dbReference>
<dbReference type="Pfam" id="PF00408">
    <property type="entry name" value="PGM_PMM_IV"/>
    <property type="match status" value="1"/>
</dbReference>
<dbReference type="PRINTS" id="PR00509">
    <property type="entry name" value="PGMPMM"/>
</dbReference>
<dbReference type="SUPFAM" id="SSF55957">
    <property type="entry name" value="Phosphoglucomutase, C-terminal domain"/>
    <property type="match status" value="1"/>
</dbReference>
<dbReference type="SUPFAM" id="SSF53738">
    <property type="entry name" value="Phosphoglucomutase, first 3 domains"/>
    <property type="match status" value="3"/>
</dbReference>
<gene>
    <name evidence="1" type="primary">glmM</name>
    <name type="ordered locus">SPO1364</name>
</gene>
<feature type="chain" id="PRO_0000147957" description="Phosphoglucosamine mutase">
    <location>
        <begin position="1"/>
        <end position="448"/>
    </location>
</feature>
<feature type="active site" description="Phosphoserine intermediate" evidence="1">
    <location>
        <position position="102"/>
    </location>
</feature>
<feature type="binding site" description="via phosphate group" evidence="1">
    <location>
        <position position="102"/>
    </location>
    <ligand>
        <name>Mg(2+)</name>
        <dbReference type="ChEBI" id="CHEBI:18420"/>
    </ligand>
</feature>
<feature type="binding site" evidence="1">
    <location>
        <position position="241"/>
    </location>
    <ligand>
        <name>Mg(2+)</name>
        <dbReference type="ChEBI" id="CHEBI:18420"/>
    </ligand>
</feature>
<feature type="binding site" evidence="1">
    <location>
        <position position="243"/>
    </location>
    <ligand>
        <name>Mg(2+)</name>
        <dbReference type="ChEBI" id="CHEBI:18420"/>
    </ligand>
</feature>
<feature type="binding site" evidence="1">
    <location>
        <position position="245"/>
    </location>
    <ligand>
        <name>Mg(2+)</name>
        <dbReference type="ChEBI" id="CHEBI:18420"/>
    </ligand>
</feature>
<feature type="modified residue" description="Phosphoserine" evidence="1">
    <location>
        <position position="102"/>
    </location>
</feature>
<evidence type="ECO:0000255" key="1">
    <source>
        <dbReference type="HAMAP-Rule" id="MF_01554"/>
    </source>
</evidence>
<protein>
    <recommendedName>
        <fullName evidence="1">Phosphoglucosamine mutase</fullName>
        <ecNumber evidence="1">5.4.2.10</ecNumber>
    </recommendedName>
</protein>
<accession>Q5LTP9</accession>
<organism>
    <name type="scientific">Ruegeria pomeroyi (strain ATCC 700808 / DSM 15171 / DSS-3)</name>
    <name type="common">Silicibacter pomeroyi</name>
    <dbReference type="NCBI Taxonomy" id="246200"/>
    <lineage>
        <taxon>Bacteria</taxon>
        <taxon>Pseudomonadati</taxon>
        <taxon>Pseudomonadota</taxon>
        <taxon>Alphaproteobacteria</taxon>
        <taxon>Rhodobacterales</taxon>
        <taxon>Roseobacteraceae</taxon>
        <taxon>Ruegeria</taxon>
    </lineage>
</organism>
<reference key="1">
    <citation type="journal article" date="2004" name="Nature">
        <title>Genome sequence of Silicibacter pomeroyi reveals adaptations to the marine environment.</title>
        <authorList>
            <person name="Moran M.A."/>
            <person name="Buchan A."/>
            <person name="Gonzalez J.M."/>
            <person name="Heidelberg J.F."/>
            <person name="Whitman W.B."/>
            <person name="Kiene R.P."/>
            <person name="Henriksen J.R."/>
            <person name="King G.M."/>
            <person name="Belas R."/>
            <person name="Fuqua C."/>
            <person name="Brinkac L.M."/>
            <person name="Lewis M."/>
            <person name="Johri S."/>
            <person name="Weaver B."/>
            <person name="Pai G."/>
            <person name="Eisen J.A."/>
            <person name="Rahe E."/>
            <person name="Sheldon W.M."/>
            <person name="Ye W."/>
            <person name="Miller T.R."/>
            <person name="Carlton J."/>
            <person name="Rasko D.A."/>
            <person name="Paulsen I.T."/>
            <person name="Ren Q."/>
            <person name="Daugherty S.C."/>
            <person name="DeBoy R.T."/>
            <person name="Dodson R.J."/>
            <person name="Durkin A.S."/>
            <person name="Madupu R."/>
            <person name="Nelson W.C."/>
            <person name="Sullivan S.A."/>
            <person name="Rosovitz M.J."/>
            <person name="Haft D.H."/>
            <person name="Selengut J."/>
            <person name="Ward N."/>
        </authorList>
    </citation>
    <scope>NUCLEOTIDE SEQUENCE [LARGE SCALE GENOMIC DNA]</scope>
    <source>
        <strain>ATCC 700808 / DSM 15171 / DSS-3</strain>
    </source>
</reference>
<reference key="2">
    <citation type="journal article" date="2014" name="Stand. Genomic Sci.">
        <title>An updated genome annotation for the model marine bacterium Ruegeria pomeroyi DSS-3.</title>
        <authorList>
            <person name="Rivers A.R."/>
            <person name="Smith C.B."/>
            <person name="Moran M.A."/>
        </authorList>
    </citation>
    <scope>GENOME REANNOTATION</scope>
    <source>
        <strain>ATCC 700808 / DSM 15171 / DSS-3</strain>
    </source>
</reference>
<comment type="function">
    <text evidence="1">Catalyzes the conversion of glucosamine-6-phosphate to glucosamine-1-phosphate.</text>
</comment>
<comment type="catalytic activity">
    <reaction evidence="1">
        <text>alpha-D-glucosamine 1-phosphate = D-glucosamine 6-phosphate</text>
        <dbReference type="Rhea" id="RHEA:23424"/>
        <dbReference type="ChEBI" id="CHEBI:58516"/>
        <dbReference type="ChEBI" id="CHEBI:58725"/>
        <dbReference type="EC" id="5.4.2.10"/>
    </reaction>
</comment>
<comment type="cofactor">
    <cofactor evidence="1">
        <name>Mg(2+)</name>
        <dbReference type="ChEBI" id="CHEBI:18420"/>
    </cofactor>
    <text evidence="1">Binds 1 Mg(2+) ion per subunit.</text>
</comment>
<comment type="PTM">
    <text evidence="1">Activated by phosphorylation.</text>
</comment>
<comment type="similarity">
    <text evidence="1">Belongs to the phosphohexose mutase family.</text>
</comment>